<dbReference type="EMBL" id="J02451">
    <property type="protein sequence ID" value="AAA32308.1"/>
    <property type="molecule type" value="Genomic_DNA"/>
</dbReference>
<dbReference type="PIR" id="A04226">
    <property type="entry name" value="VCBPFD"/>
</dbReference>
<dbReference type="PDB" id="1FDM">
    <property type="method" value="NMR"/>
    <property type="chains" value="A=24-73"/>
</dbReference>
<dbReference type="PDB" id="1IFD">
    <property type="method" value="Fiber"/>
    <property type="resolution" value="4.00 A"/>
    <property type="chains" value="A=24-73"/>
</dbReference>
<dbReference type="PDB" id="1IFI">
    <property type="method" value="Fiber"/>
    <property type="resolution" value="3.30 A"/>
    <property type="chains" value="A=24-73"/>
</dbReference>
<dbReference type="PDB" id="1IFJ">
    <property type="method" value="Fiber"/>
    <property type="resolution" value="3.30 A"/>
    <property type="chains" value="A=24-73"/>
</dbReference>
<dbReference type="PDB" id="1MZT">
    <property type="method" value="NMR"/>
    <property type="chains" value="A=24-73"/>
</dbReference>
<dbReference type="PDB" id="2C0W">
    <property type="method" value="X-ray"/>
    <property type="resolution" value="3.20 A"/>
    <property type="chains" value="A=24-73"/>
</dbReference>
<dbReference type="PDB" id="2C0X">
    <property type="method" value="NMR"/>
    <property type="chains" value="A=24-73"/>
</dbReference>
<dbReference type="PDB" id="2HI5">
    <property type="method" value="EM"/>
    <property type="resolution" value="8.00 A"/>
    <property type="chains" value="A=24-73"/>
</dbReference>
<dbReference type="PDB" id="8CH5">
    <property type="method" value="EM"/>
    <property type="resolution" value="3.20 A"/>
    <property type="chains" value="A=24-73"/>
</dbReference>
<dbReference type="PDBsum" id="1FDM"/>
<dbReference type="PDBsum" id="1IFD"/>
<dbReference type="PDBsum" id="1IFI"/>
<dbReference type="PDBsum" id="1IFJ"/>
<dbReference type="PDBsum" id="1MZT"/>
<dbReference type="PDBsum" id="2C0W"/>
<dbReference type="PDBsum" id="2C0X"/>
<dbReference type="PDBsum" id="2HI5"/>
<dbReference type="PDBsum" id="8CH5"/>
<dbReference type="BMRB" id="P69539"/>
<dbReference type="EMDB" id="EMD-16657"/>
<dbReference type="SMR" id="P69539"/>
<dbReference type="KEGG" id="vg:22475003"/>
<dbReference type="EvolutionaryTrace" id="P69539"/>
<dbReference type="Proteomes" id="UP000001836">
    <property type="component" value="Genome"/>
</dbReference>
<dbReference type="GO" id="GO:0019029">
    <property type="term" value="C:helical viral capsid"/>
    <property type="evidence" value="ECO:0007669"/>
    <property type="project" value="UniProtKB-KW"/>
</dbReference>
<dbReference type="GO" id="GO:0033644">
    <property type="term" value="C:host cell membrane"/>
    <property type="evidence" value="ECO:0007669"/>
    <property type="project" value="UniProtKB-SubCell"/>
</dbReference>
<dbReference type="GO" id="GO:0016020">
    <property type="term" value="C:membrane"/>
    <property type="evidence" value="ECO:0007669"/>
    <property type="project" value="UniProtKB-KW"/>
</dbReference>
<dbReference type="Gene3D" id="1.20.5.80">
    <property type="match status" value="1"/>
</dbReference>
<dbReference type="InterPro" id="IPR008020">
    <property type="entry name" value="G8P"/>
</dbReference>
<dbReference type="InterPro" id="IPR023390">
    <property type="entry name" value="Phage_M13_G8P_capsid_dom_sf"/>
</dbReference>
<dbReference type="Pfam" id="PF19199">
    <property type="entry name" value="Phage_coatGP8"/>
    <property type="match status" value="1"/>
</dbReference>
<dbReference type="PIRSF" id="PIRSF004117">
    <property type="entry name" value="Phage_coat_B"/>
    <property type="match status" value="1"/>
</dbReference>
<dbReference type="SUPFAM" id="SSF57987">
    <property type="entry name" value="Inovirus (filamentous phage) major coat protein"/>
    <property type="match status" value="1"/>
</dbReference>
<accession>P69539</accession>
<accession>P03617</accession>
<reference key="1">
    <citation type="journal article" date="1978" name="Nucleic Acids Res.">
        <title>Nucleotide sequence of bacteriophage fd DNA.</title>
        <authorList>
            <person name="Beck E."/>
            <person name="Sommer R."/>
            <person name="Auerswald E.A."/>
            <person name="Kurz C."/>
            <person name="Zink B."/>
            <person name="Osterburg G."/>
            <person name="Schaller H."/>
            <person name="Sugimoto K."/>
            <person name="Sugisaki H."/>
            <person name="Okamoto T."/>
            <person name="Takanami M."/>
        </authorList>
    </citation>
    <scope>NUCLEOTIDE SEQUENCE [GENOMIC DNA]</scope>
    <source>
        <strain>478 / Heidelberg</strain>
    </source>
</reference>
<reference key="2">
    <citation type="journal article" date="1969" name="Hoppe-Seyler's Z. Physiol. Chem.">
        <title>Virus proteins. IV. Constitution of the coat protein of the fd phage.</title>
        <authorList>
            <person name="Asbeck F."/>
            <person name="Beyreuther K."/>
            <person name="Kohler H."/>
            <person name="von Wettstein G."/>
            <person name="Braunitzer G."/>
        </authorList>
    </citation>
    <scope>PROTEIN SEQUENCE OF 24-73</scope>
    <source>
        <strain>478 / Heidelberg</strain>
    </source>
</reference>
<reference key="3">
    <citation type="journal article" date="1974" name="J. Mol. Biol.">
        <title>Reinvestigation of a region of the fd bacteriophage coat protein sequence.</title>
        <authorList>
            <person name="Nakashima Y."/>
            <person name="Konigsberg W."/>
        </authorList>
    </citation>
    <scope>PROTEIN SEQUENCE OF 24-73</scope>
    <scope>SEQUENCE REVISION</scope>
</reference>
<reference key="4">
    <citation type="journal article" date="1997" name="J. Mol. Biol.">
        <title>fd coat protein structure in membrane environments: structural dynamics of the loop between the hydrophobic trans-membrane helix and the amphipathic in-plane helix.</title>
        <authorList>
            <person name="Almeida F.C."/>
            <person name="Opella S.J."/>
        </authorList>
    </citation>
    <scope>STRUCTURE BY NMR</scope>
</reference>
<reference key="5">
    <citation type="journal article" date="1994" name="J. Mol. Biol.">
        <title>Molecular models and structural comparisons of native and mutant class I filamentous bacteriophages Ff (fd, f1, M13), If1 and IKe.</title>
        <authorList>
            <person name="Marvin D.A."/>
            <person name="Hale R.D."/>
            <person name="Nave C."/>
            <person name="Citterich M.H."/>
        </authorList>
    </citation>
    <scope>X-RAY CRYSTALLOGRAPHY (3.3 ANGSTROMS)</scope>
</reference>
<comment type="function">
    <text evidence="1">Self assembles to form a helical capsid wrapping up the viral genomic DNA. The capsid displays a filamentous structure with a length of 760-1950 nm and a width of 6-8 nm. The virion assembly and budding take place at the host inner membrane (By similarity).</text>
</comment>
<comment type="subunit">
    <text evidence="1">Homomultimerizes. There are several thousands of this protein in the phage capsid (By similarity).</text>
</comment>
<comment type="subcellular location">
    <subcellularLocation>
        <location evidence="4">Virion</location>
    </subcellularLocation>
    <subcellularLocation>
        <location>Host membrane</location>
        <topology>Single-pass type I membrane protein</topology>
    </subcellularLocation>
    <text evidence="1">prior to assembly, the major capsid protein is found associated with the bacterial host inner membrane.</text>
</comment>
<comment type="similarity">
    <text evidence="4">Belongs to the inovirus capsid protein family.</text>
</comment>
<proteinExistence type="evidence at protein level"/>
<keyword id="KW-0002">3D-structure</keyword>
<keyword id="KW-0167">Capsid protein</keyword>
<keyword id="KW-0903">Direct protein sequencing</keyword>
<keyword id="KW-1139">Helical capsid protein</keyword>
<keyword id="KW-1043">Host membrane</keyword>
<keyword id="KW-0472">Membrane</keyword>
<keyword id="KW-0732">Signal</keyword>
<keyword id="KW-0812">Transmembrane</keyword>
<keyword id="KW-1133">Transmembrane helix</keyword>
<keyword id="KW-0946">Virion</keyword>
<feature type="signal peptide" evidence="2 3">
    <location>
        <begin position="1"/>
        <end position="23"/>
    </location>
</feature>
<feature type="chain" id="PRO_0000003296" description="Capsid protein G8P">
    <location>
        <begin position="24"/>
        <end position="73"/>
    </location>
</feature>
<feature type="topological domain" description="Periplasmic">
    <location>
        <begin position="24"/>
        <end position="44"/>
    </location>
</feature>
<feature type="transmembrane region" description="Helical" evidence="1">
    <location>
        <begin position="45"/>
        <end position="65"/>
    </location>
</feature>
<feature type="topological domain" description="Cytoplasmic">
    <location>
        <begin position="66"/>
        <end position="73"/>
    </location>
</feature>
<feature type="helix" evidence="5">
    <location>
        <begin position="28"/>
        <end position="70"/>
    </location>
</feature>
<name>CAPSD_BPFD</name>
<organism>
    <name type="scientific">Enterobacteria phage fd</name>
    <name type="common">Bacteriophage fd</name>
    <dbReference type="NCBI Taxonomy" id="2847073"/>
    <lineage>
        <taxon>Viruses</taxon>
        <taxon>Monodnaviria</taxon>
        <taxon>Loebvirae</taxon>
        <taxon>Hofneiviricota</taxon>
        <taxon>Faserviricetes</taxon>
        <taxon>Tubulavirales</taxon>
        <taxon>Inoviridae</taxon>
        <taxon>Inovirus</taxon>
        <taxon>Enterobacteria phage M13</taxon>
    </lineage>
</organism>
<protein>
    <recommendedName>
        <fullName>Capsid protein G8P</fullName>
    </recommendedName>
    <alternativeName>
        <fullName>Coat protein B</fullName>
    </alternativeName>
    <alternativeName>
        <fullName>Gene 8 protein</fullName>
        <shortName>G8P</shortName>
    </alternativeName>
    <alternativeName>
        <fullName>Major coat protein</fullName>
    </alternativeName>
</protein>
<sequence length="73" mass="7626">MKKSLVLKASVAVATLVPMLSFAAEGDDPAKAAFDSLQASATEYIGYAWAMVVVIVGATIGIKLFKKFTSKAS</sequence>
<evidence type="ECO:0000250" key="1"/>
<evidence type="ECO:0000269" key="2">
    <source>
    </source>
</evidence>
<evidence type="ECO:0000269" key="3">
    <source>
    </source>
</evidence>
<evidence type="ECO:0000305" key="4"/>
<evidence type="ECO:0007829" key="5">
    <source>
        <dbReference type="PDB" id="2C0W"/>
    </source>
</evidence>
<organismHost>
    <name type="scientific">Escherichia coli</name>
    <dbReference type="NCBI Taxonomy" id="562"/>
</organismHost>
<gene>
    <name type="primary">VIII</name>
</gene>